<protein>
    <recommendedName>
        <fullName evidence="1">UPF0102 protein RL0336</fullName>
    </recommendedName>
</protein>
<reference key="1">
    <citation type="journal article" date="2006" name="Genome Biol.">
        <title>The genome of Rhizobium leguminosarum has recognizable core and accessory components.</title>
        <authorList>
            <person name="Young J.P.W."/>
            <person name="Crossman L.C."/>
            <person name="Johnston A.W.B."/>
            <person name="Thomson N.R."/>
            <person name="Ghazoui Z.F."/>
            <person name="Hull K.H."/>
            <person name="Wexler M."/>
            <person name="Curson A.R.J."/>
            <person name="Todd J.D."/>
            <person name="Poole P.S."/>
            <person name="Mauchline T.H."/>
            <person name="East A.K."/>
            <person name="Quail M.A."/>
            <person name="Churcher C."/>
            <person name="Arrowsmith C."/>
            <person name="Cherevach I."/>
            <person name="Chillingworth T."/>
            <person name="Clarke K."/>
            <person name="Cronin A."/>
            <person name="Davis P."/>
            <person name="Fraser A."/>
            <person name="Hance Z."/>
            <person name="Hauser H."/>
            <person name="Jagels K."/>
            <person name="Moule S."/>
            <person name="Mungall K."/>
            <person name="Norbertczak H."/>
            <person name="Rabbinowitsch E."/>
            <person name="Sanders M."/>
            <person name="Simmonds M."/>
            <person name="Whitehead S."/>
            <person name="Parkhill J."/>
        </authorList>
    </citation>
    <scope>NUCLEOTIDE SEQUENCE [LARGE SCALE GENOMIC DNA]</scope>
    <source>
        <strain>DSM 114642 / LMG 32736 / 3841</strain>
    </source>
</reference>
<dbReference type="EMBL" id="AM236080">
    <property type="protein sequence ID" value="CAK05826.1"/>
    <property type="molecule type" value="Genomic_DNA"/>
</dbReference>
<dbReference type="RefSeq" id="WP_011650138.1">
    <property type="nucleotide sequence ID" value="NC_008380.1"/>
</dbReference>
<dbReference type="SMR" id="Q1MMH6"/>
<dbReference type="EnsemblBacteria" id="CAK05826">
    <property type="protein sequence ID" value="CAK05826"/>
    <property type="gene ID" value="RL0336"/>
</dbReference>
<dbReference type="KEGG" id="rle:RL0336"/>
<dbReference type="eggNOG" id="COG0792">
    <property type="taxonomic scope" value="Bacteria"/>
</dbReference>
<dbReference type="HOGENOM" id="CLU_115353_0_2_5"/>
<dbReference type="Proteomes" id="UP000006575">
    <property type="component" value="Chromosome"/>
</dbReference>
<dbReference type="GO" id="GO:0003676">
    <property type="term" value="F:nucleic acid binding"/>
    <property type="evidence" value="ECO:0007669"/>
    <property type="project" value="InterPro"/>
</dbReference>
<dbReference type="Gene3D" id="3.40.1350.10">
    <property type="match status" value="1"/>
</dbReference>
<dbReference type="HAMAP" id="MF_00048">
    <property type="entry name" value="UPF0102"/>
    <property type="match status" value="1"/>
</dbReference>
<dbReference type="InterPro" id="IPR011335">
    <property type="entry name" value="Restrct_endonuc-II-like"/>
</dbReference>
<dbReference type="InterPro" id="IPR011856">
    <property type="entry name" value="tRNA_endonuc-like_dom_sf"/>
</dbReference>
<dbReference type="InterPro" id="IPR003509">
    <property type="entry name" value="UPF0102_YraN-like"/>
</dbReference>
<dbReference type="NCBIfam" id="NF009151">
    <property type="entry name" value="PRK12497.1-5"/>
    <property type="match status" value="1"/>
</dbReference>
<dbReference type="PANTHER" id="PTHR34039">
    <property type="entry name" value="UPF0102 PROTEIN YRAN"/>
    <property type="match status" value="1"/>
</dbReference>
<dbReference type="PANTHER" id="PTHR34039:SF1">
    <property type="entry name" value="UPF0102 PROTEIN YRAN"/>
    <property type="match status" value="1"/>
</dbReference>
<dbReference type="Pfam" id="PF02021">
    <property type="entry name" value="UPF0102"/>
    <property type="match status" value="1"/>
</dbReference>
<dbReference type="SUPFAM" id="SSF52980">
    <property type="entry name" value="Restriction endonuclease-like"/>
    <property type="match status" value="1"/>
</dbReference>
<accession>Q1MMH6</accession>
<sequence>MGDSDLTAIRRKALRRGRISEYVAAVFLMLKGYRILALRHRTRLGEIDIIARKGDLAVFVEVKARHGEAAAVDAVSVAAQKRIRAASDLWLARQADQARLSQRYDIVAIMPGRLPRHFLDAF</sequence>
<evidence type="ECO:0000255" key="1">
    <source>
        <dbReference type="HAMAP-Rule" id="MF_00048"/>
    </source>
</evidence>
<name>Y336_RHIJ3</name>
<feature type="chain" id="PRO_1000009249" description="UPF0102 protein RL0336">
    <location>
        <begin position="1"/>
        <end position="122"/>
    </location>
</feature>
<organism>
    <name type="scientific">Rhizobium johnstonii (strain DSM 114642 / LMG 32736 / 3841)</name>
    <name type="common">Rhizobium leguminosarum bv. viciae</name>
    <dbReference type="NCBI Taxonomy" id="216596"/>
    <lineage>
        <taxon>Bacteria</taxon>
        <taxon>Pseudomonadati</taxon>
        <taxon>Pseudomonadota</taxon>
        <taxon>Alphaproteobacteria</taxon>
        <taxon>Hyphomicrobiales</taxon>
        <taxon>Rhizobiaceae</taxon>
        <taxon>Rhizobium/Agrobacterium group</taxon>
        <taxon>Rhizobium</taxon>
        <taxon>Rhizobium johnstonii</taxon>
    </lineage>
</organism>
<comment type="similarity">
    <text evidence="1">Belongs to the UPF0102 family.</text>
</comment>
<proteinExistence type="inferred from homology"/>
<gene>
    <name type="ordered locus">RL0336</name>
</gene>